<sequence length="62" mass="7293">MEYSTGQHLLVVPEIKKYVLTNTFSGEEHIVTEQMLKSAFKDEYNKIMSNRNSAWTVTDFYE</sequence>
<gene>
    <name type="primary">45.2</name>
</gene>
<dbReference type="EMBL" id="AF039565">
    <property type="protein sequence ID" value="AAC39309.1"/>
    <property type="molecule type" value="Genomic_DNA"/>
</dbReference>
<dbReference type="EMBL" id="AY303349">
    <property type="protein sequence ID" value="AAP75964.1"/>
    <property type="molecule type" value="Genomic_DNA"/>
</dbReference>
<dbReference type="RefSeq" id="NP_861752.1">
    <property type="nucleotide sequence ID" value="NC_004928.1"/>
</dbReference>
<dbReference type="GeneID" id="1494178"/>
<dbReference type="KEGG" id="vg:1494178"/>
<dbReference type="OrthoDB" id="23113at10239"/>
<dbReference type="Proteomes" id="UP000000876">
    <property type="component" value="Genome"/>
</dbReference>
<dbReference type="InterPro" id="IPR035342">
    <property type="entry name" value="Gp45.2"/>
</dbReference>
<dbReference type="Pfam" id="PF17470">
    <property type="entry name" value="Gp45_2"/>
    <property type="match status" value="1"/>
</dbReference>
<name>VG452_BPR69</name>
<protein>
    <recommendedName>
        <fullName>Protein Gp45.2</fullName>
    </recommendedName>
</protein>
<keyword id="KW-1185">Reference proteome</keyword>
<feature type="chain" id="PRO_0000164991" description="Protein Gp45.2">
    <location>
        <begin position="1"/>
        <end position="62"/>
    </location>
</feature>
<accession>O64300</accession>
<accession>Q76XX5</accession>
<reference key="1">
    <citation type="journal article" date="1998" name="J. Bacteriol.">
        <title>Divergence of a DNA replication gene cluster in the T4-related bacteriophage RB69.</title>
        <authorList>
            <person name="Yeh L.-S."/>
            <person name="Hsu T."/>
            <person name="Karam J.D."/>
        </authorList>
    </citation>
    <scope>NUCLEOTIDE SEQUENCE [GENOMIC DNA]</scope>
</reference>
<reference key="2">
    <citation type="submission" date="2003-05" db="EMBL/GenBank/DDBJ databases">
        <title>Enterobacteria phage RB69 complete genome.</title>
        <authorList>
            <person name="Petrov V."/>
            <person name="Nolan J."/>
            <person name="Chin D."/>
            <person name="Letarov A."/>
            <person name="Krisch H.M."/>
            <person name="Karam J.D."/>
        </authorList>
    </citation>
    <scope>NUCLEOTIDE SEQUENCE [LARGE SCALE GENOMIC DNA]</scope>
</reference>
<organismHost>
    <name type="scientific">Escherichia coli</name>
    <dbReference type="NCBI Taxonomy" id="562"/>
</organismHost>
<proteinExistence type="predicted"/>
<organism>
    <name type="scientific">Escherichia phage RB69</name>
    <name type="common">Bacteriophage RB69</name>
    <dbReference type="NCBI Taxonomy" id="12353"/>
    <lineage>
        <taxon>Viruses</taxon>
        <taxon>Duplodnaviria</taxon>
        <taxon>Heunggongvirae</taxon>
        <taxon>Uroviricota</taxon>
        <taxon>Caudoviricetes</taxon>
        <taxon>Straboviridae</taxon>
        <taxon>Tevenvirinae</taxon>
        <taxon>Mosigvirus</taxon>
        <taxon>Mosigvirus RB69</taxon>
    </lineage>
</organism>